<gene>
    <name evidence="1" type="primary">xylA</name>
    <name type="ordered locus">HSM_0936</name>
</gene>
<organism>
    <name type="scientific">Histophilus somni (strain 2336)</name>
    <name type="common">Haemophilus somnus</name>
    <dbReference type="NCBI Taxonomy" id="228400"/>
    <lineage>
        <taxon>Bacteria</taxon>
        <taxon>Pseudomonadati</taxon>
        <taxon>Pseudomonadota</taxon>
        <taxon>Gammaproteobacteria</taxon>
        <taxon>Pasteurellales</taxon>
        <taxon>Pasteurellaceae</taxon>
        <taxon>Histophilus</taxon>
    </lineage>
</organism>
<keyword id="KW-0119">Carbohydrate metabolism</keyword>
<keyword id="KW-0963">Cytoplasm</keyword>
<keyword id="KW-0413">Isomerase</keyword>
<keyword id="KW-0460">Magnesium</keyword>
<keyword id="KW-0479">Metal-binding</keyword>
<keyword id="KW-0859">Xylose metabolism</keyword>
<evidence type="ECO:0000255" key="1">
    <source>
        <dbReference type="HAMAP-Rule" id="MF_00455"/>
    </source>
</evidence>
<feature type="chain" id="PRO_1000081030" description="Xylose isomerase">
    <location>
        <begin position="1"/>
        <end position="439"/>
    </location>
</feature>
<feature type="active site" evidence="1">
    <location>
        <position position="101"/>
    </location>
</feature>
<feature type="active site" evidence="1">
    <location>
        <position position="104"/>
    </location>
</feature>
<feature type="binding site" evidence="1">
    <location>
        <position position="232"/>
    </location>
    <ligand>
        <name>Mg(2+)</name>
        <dbReference type="ChEBI" id="CHEBI:18420"/>
        <label>1</label>
    </ligand>
</feature>
<feature type="binding site" evidence="1">
    <location>
        <position position="268"/>
    </location>
    <ligand>
        <name>Mg(2+)</name>
        <dbReference type="ChEBI" id="CHEBI:18420"/>
        <label>1</label>
    </ligand>
</feature>
<feature type="binding site" evidence="1">
    <location>
        <position position="268"/>
    </location>
    <ligand>
        <name>Mg(2+)</name>
        <dbReference type="ChEBI" id="CHEBI:18420"/>
        <label>2</label>
    </ligand>
</feature>
<feature type="binding site" evidence="1">
    <location>
        <position position="271"/>
    </location>
    <ligand>
        <name>Mg(2+)</name>
        <dbReference type="ChEBI" id="CHEBI:18420"/>
        <label>2</label>
    </ligand>
</feature>
<feature type="binding site" evidence="1">
    <location>
        <position position="296"/>
    </location>
    <ligand>
        <name>Mg(2+)</name>
        <dbReference type="ChEBI" id="CHEBI:18420"/>
        <label>1</label>
    </ligand>
</feature>
<feature type="binding site" evidence="1">
    <location>
        <position position="307"/>
    </location>
    <ligand>
        <name>Mg(2+)</name>
        <dbReference type="ChEBI" id="CHEBI:18420"/>
        <label>2</label>
    </ligand>
</feature>
<feature type="binding site" evidence="1">
    <location>
        <position position="309"/>
    </location>
    <ligand>
        <name>Mg(2+)</name>
        <dbReference type="ChEBI" id="CHEBI:18420"/>
        <label>2</label>
    </ligand>
</feature>
<feature type="binding site" evidence="1">
    <location>
        <position position="339"/>
    </location>
    <ligand>
        <name>Mg(2+)</name>
        <dbReference type="ChEBI" id="CHEBI:18420"/>
        <label>1</label>
    </ligand>
</feature>
<name>XYLA_HISS2</name>
<proteinExistence type="inferred from homology"/>
<protein>
    <recommendedName>
        <fullName evidence="1">Xylose isomerase</fullName>
        <ecNumber evidence="1">5.3.1.5</ecNumber>
    </recommendedName>
</protein>
<comment type="catalytic activity">
    <reaction evidence="1">
        <text>alpha-D-xylose = alpha-D-xylulofuranose</text>
        <dbReference type="Rhea" id="RHEA:22816"/>
        <dbReference type="ChEBI" id="CHEBI:28518"/>
        <dbReference type="ChEBI" id="CHEBI:188998"/>
        <dbReference type="EC" id="5.3.1.5"/>
    </reaction>
</comment>
<comment type="cofactor">
    <cofactor evidence="1">
        <name>Mg(2+)</name>
        <dbReference type="ChEBI" id="CHEBI:18420"/>
    </cofactor>
    <text evidence="1">Binds 2 magnesium ions per subunit.</text>
</comment>
<comment type="subunit">
    <text evidence="1">Homotetramer.</text>
</comment>
<comment type="subcellular location">
    <subcellularLocation>
        <location evidence="1">Cytoplasm</location>
    </subcellularLocation>
</comment>
<comment type="similarity">
    <text evidence="1">Belongs to the xylose isomerase family.</text>
</comment>
<dbReference type="EC" id="5.3.1.5" evidence="1"/>
<dbReference type="EMBL" id="CP000947">
    <property type="protein sequence ID" value="ACA32619.1"/>
    <property type="molecule type" value="Genomic_DNA"/>
</dbReference>
<dbReference type="RefSeq" id="WP_012341741.1">
    <property type="nucleotide sequence ID" value="NC_010519.1"/>
</dbReference>
<dbReference type="SMR" id="B0UT19"/>
<dbReference type="STRING" id="228400.HSM_0936"/>
<dbReference type="GeneID" id="31487235"/>
<dbReference type="KEGG" id="hsm:HSM_0936"/>
<dbReference type="HOGENOM" id="CLU_037261_1_0_6"/>
<dbReference type="GO" id="GO:0005737">
    <property type="term" value="C:cytoplasm"/>
    <property type="evidence" value="ECO:0007669"/>
    <property type="project" value="UniProtKB-SubCell"/>
</dbReference>
<dbReference type="GO" id="GO:0000287">
    <property type="term" value="F:magnesium ion binding"/>
    <property type="evidence" value="ECO:0007669"/>
    <property type="project" value="UniProtKB-UniRule"/>
</dbReference>
<dbReference type="GO" id="GO:0009045">
    <property type="term" value="F:xylose isomerase activity"/>
    <property type="evidence" value="ECO:0007669"/>
    <property type="project" value="UniProtKB-UniRule"/>
</dbReference>
<dbReference type="GO" id="GO:0042732">
    <property type="term" value="P:D-xylose metabolic process"/>
    <property type="evidence" value="ECO:0007669"/>
    <property type="project" value="UniProtKB-UniRule"/>
</dbReference>
<dbReference type="FunFam" id="3.20.20.150:FF:000002">
    <property type="entry name" value="Xylose isomerase"/>
    <property type="match status" value="1"/>
</dbReference>
<dbReference type="Gene3D" id="3.20.20.150">
    <property type="entry name" value="Divalent-metal-dependent TIM barrel enzymes"/>
    <property type="match status" value="1"/>
</dbReference>
<dbReference type="HAMAP" id="MF_00455">
    <property type="entry name" value="Xylose_isom_A"/>
    <property type="match status" value="1"/>
</dbReference>
<dbReference type="InterPro" id="IPR036237">
    <property type="entry name" value="Xyl_isomerase-like_sf"/>
</dbReference>
<dbReference type="InterPro" id="IPR013452">
    <property type="entry name" value="Xylose_isom_bac"/>
</dbReference>
<dbReference type="InterPro" id="IPR001998">
    <property type="entry name" value="Xylose_isomerase"/>
</dbReference>
<dbReference type="NCBIfam" id="NF003998">
    <property type="entry name" value="PRK05474.1"/>
    <property type="match status" value="1"/>
</dbReference>
<dbReference type="NCBIfam" id="TIGR02630">
    <property type="entry name" value="xylose_isom_A"/>
    <property type="match status" value="1"/>
</dbReference>
<dbReference type="PANTHER" id="PTHR48408">
    <property type="match status" value="1"/>
</dbReference>
<dbReference type="PANTHER" id="PTHR48408:SF1">
    <property type="entry name" value="XYLOSE ISOMERASE"/>
    <property type="match status" value="1"/>
</dbReference>
<dbReference type="PRINTS" id="PR00688">
    <property type="entry name" value="XYLOSISMRASE"/>
</dbReference>
<dbReference type="SUPFAM" id="SSF51658">
    <property type="entry name" value="Xylose isomerase-like"/>
    <property type="match status" value="1"/>
</dbReference>
<dbReference type="PROSITE" id="PS51415">
    <property type="entry name" value="XYLOSE_ISOMERASE"/>
    <property type="match status" value="1"/>
</dbReference>
<reference key="1">
    <citation type="submission" date="2008-02" db="EMBL/GenBank/DDBJ databases">
        <title>Complete sequence of Haemophilus somnus 2336.</title>
        <authorList>
            <consortium name="US DOE Joint Genome Institute"/>
            <person name="Siddaramappa S."/>
            <person name="Duncan A.J."/>
            <person name="Challacombe J.F."/>
            <person name="Rainey D."/>
            <person name="Gillaspy A.F."/>
            <person name="Carson M."/>
            <person name="Gipson J."/>
            <person name="Gipson M."/>
            <person name="Bruce D."/>
            <person name="Detter J.C."/>
            <person name="Han C.S."/>
            <person name="Land M."/>
            <person name="Tapia R."/>
            <person name="Thompson L.S."/>
            <person name="Orvis J."/>
            <person name="Zaitshik J."/>
            <person name="Barnes G."/>
            <person name="Brettin T.S."/>
            <person name="Dyer D.W."/>
            <person name="Inzana T.J."/>
        </authorList>
    </citation>
    <scope>NUCLEOTIDE SEQUENCE [LARGE SCALE GENOMIC DNA]</scope>
    <source>
        <strain>2336</strain>
    </source>
</reference>
<sequence>MSNYFDKIAKVNYEGANSTNPFAFKHYNPNEVILGKTVEEHLRLAVCYWHTFCWTGNDMFGAGSLDRSWQKTGDLLVGAKQKAEIAFEFFQKLGVPYYSFHDVDIAPESNNFKEYLHNFNTIVDILEKKQSETGVKLLWGTANCFTNPRYMSGASTNPNPEVFAWAAAQVFTAMNATQRLGGENYVLWGGREGYETLLNTDLKREREQIGRFMQLVVEHKYKIGFQGTLLIEPKPQEPTKHQYDYDVATVYGFLKQFGLENEIKVNIEANHATLAGHTFQHEIATATSLGIFGSIDANRGDPQLGWDTDQFPNSVEENTLAMYEILKAGGFTTGGFNFDAKIRRQSTDPYDLFHAHIGAMDVLALSLKRAAKMIEDQTLQKVVDNRYAGWDQELGQKILSGKASLEDLAKIVETQGLDPKPVSGQQEYLENLVNSYLYR</sequence>
<accession>B0UT19</accession>